<organism>
    <name type="scientific">Salmonella paratyphi C (strain RKS4594)</name>
    <dbReference type="NCBI Taxonomy" id="476213"/>
    <lineage>
        <taxon>Bacteria</taxon>
        <taxon>Pseudomonadati</taxon>
        <taxon>Pseudomonadota</taxon>
        <taxon>Gammaproteobacteria</taxon>
        <taxon>Enterobacterales</taxon>
        <taxon>Enterobacteriaceae</taxon>
        <taxon>Salmonella</taxon>
    </lineage>
</organism>
<reference key="1">
    <citation type="journal article" date="2009" name="PLoS ONE">
        <title>Salmonella paratyphi C: genetic divergence from Salmonella choleraesuis and pathogenic convergence with Salmonella typhi.</title>
        <authorList>
            <person name="Liu W.-Q."/>
            <person name="Feng Y."/>
            <person name="Wang Y."/>
            <person name="Zou Q.-H."/>
            <person name="Chen F."/>
            <person name="Guo J.-T."/>
            <person name="Peng Y.-H."/>
            <person name="Jin Y."/>
            <person name="Li Y.-G."/>
            <person name="Hu S.-N."/>
            <person name="Johnston R.N."/>
            <person name="Liu G.-R."/>
            <person name="Liu S.-L."/>
        </authorList>
    </citation>
    <scope>NUCLEOTIDE SEQUENCE [LARGE SCALE GENOMIC DNA]</scope>
    <source>
        <strain>RKS4594</strain>
    </source>
</reference>
<name>ACPH_SALPC</name>
<dbReference type="EC" id="3.1.4.14" evidence="1"/>
<dbReference type="EMBL" id="CP000857">
    <property type="protein sequence ID" value="ACN44597.1"/>
    <property type="molecule type" value="Genomic_DNA"/>
</dbReference>
<dbReference type="RefSeq" id="WP_001009858.1">
    <property type="nucleotide sequence ID" value="NC_012125.1"/>
</dbReference>
<dbReference type="SMR" id="C0Q7S7"/>
<dbReference type="KEGG" id="sei:SPC_0414"/>
<dbReference type="HOGENOM" id="CLU_099370_1_0_6"/>
<dbReference type="Proteomes" id="UP000001599">
    <property type="component" value="Chromosome"/>
</dbReference>
<dbReference type="GO" id="GO:0008770">
    <property type="term" value="F:[acyl-carrier-protein] phosphodiesterase activity"/>
    <property type="evidence" value="ECO:0007669"/>
    <property type="project" value="UniProtKB-UniRule"/>
</dbReference>
<dbReference type="GO" id="GO:0006633">
    <property type="term" value="P:fatty acid biosynthetic process"/>
    <property type="evidence" value="ECO:0007669"/>
    <property type="project" value="UniProtKB-UniRule"/>
</dbReference>
<dbReference type="HAMAP" id="MF_01950">
    <property type="entry name" value="AcpH"/>
    <property type="match status" value="1"/>
</dbReference>
<dbReference type="InterPro" id="IPR007431">
    <property type="entry name" value="ACP_PD"/>
</dbReference>
<dbReference type="InterPro" id="IPR023491">
    <property type="entry name" value="ACP_phosphodiesterase_gpbac"/>
</dbReference>
<dbReference type="NCBIfam" id="NF007466">
    <property type="entry name" value="PRK10045.1"/>
    <property type="match status" value="1"/>
</dbReference>
<dbReference type="PANTHER" id="PTHR38764">
    <property type="entry name" value="ACYL CARRIER PROTEIN PHOSPHODIESTERASE"/>
    <property type="match status" value="1"/>
</dbReference>
<dbReference type="PANTHER" id="PTHR38764:SF1">
    <property type="entry name" value="ACYL CARRIER PROTEIN PHOSPHODIESTERASE"/>
    <property type="match status" value="1"/>
</dbReference>
<dbReference type="Pfam" id="PF04336">
    <property type="entry name" value="ACP_PD"/>
    <property type="match status" value="1"/>
</dbReference>
<dbReference type="PIRSF" id="PIRSF011489">
    <property type="entry name" value="DUF479"/>
    <property type="match status" value="1"/>
</dbReference>
<proteinExistence type="inferred from homology"/>
<feature type="chain" id="PRO_1000188816" description="Acyl carrier protein phosphodiesterase">
    <location>
        <begin position="1"/>
        <end position="193"/>
    </location>
</feature>
<comment type="function">
    <text evidence="1">Converts holo-ACP to apo-ACP by hydrolytic cleavage of the phosphopantetheine prosthetic group from ACP.</text>
</comment>
<comment type="catalytic activity">
    <reaction evidence="1">
        <text>holo-[ACP] + H2O = apo-[ACP] + (R)-4'-phosphopantetheine + H(+)</text>
        <dbReference type="Rhea" id="RHEA:20537"/>
        <dbReference type="Rhea" id="RHEA-COMP:9685"/>
        <dbReference type="Rhea" id="RHEA-COMP:9690"/>
        <dbReference type="ChEBI" id="CHEBI:15377"/>
        <dbReference type="ChEBI" id="CHEBI:15378"/>
        <dbReference type="ChEBI" id="CHEBI:29999"/>
        <dbReference type="ChEBI" id="CHEBI:61723"/>
        <dbReference type="ChEBI" id="CHEBI:64479"/>
        <dbReference type="EC" id="3.1.4.14"/>
    </reaction>
</comment>
<comment type="similarity">
    <text evidence="1">Belongs to the AcpH family.</text>
</comment>
<protein>
    <recommendedName>
        <fullName evidence="1">Acyl carrier protein phosphodiesterase</fullName>
        <shortName evidence="1">ACP phosphodiesterase</shortName>
        <ecNumber evidence="1">3.1.4.14</ecNumber>
    </recommendedName>
</protein>
<evidence type="ECO:0000255" key="1">
    <source>
        <dbReference type="HAMAP-Rule" id="MF_01950"/>
    </source>
</evidence>
<keyword id="KW-0275">Fatty acid biosynthesis</keyword>
<keyword id="KW-0276">Fatty acid metabolism</keyword>
<keyword id="KW-0378">Hydrolase</keyword>
<keyword id="KW-0444">Lipid biosynthesis</keyword>
<keyword id="KW-0443">Lipid metabolism</keyword>
<sequence length="193" mass="22917">MNFLAHLHLAHLADSSLSGNLLADFVRGNPATHYPPDVVEGIYMHRRIDVMTDNLPEVREAREWFRHETRRVAPITLDVMWDHFLSRHWTQISPDFPLQAFVGYAHAQVATILPDSPPRFVNLNDYLWSEKWLERYRDMDFIQNVLNGMANRRPRLDALRDSWYDLDAHYDALEERFWHFYPRMMAQAARKAL</sequence>
<gene>
    <name evidence="1" type="primary">acpH</name>
    <name type="ordered locus">SPC_0414</name>
</gene>
<accession>C0Q7S7</accession>